<comment type="function">
    <text evidence="1">Catalyzes the deamination of dCTP to dUTP.</text>
</comment>
<comment type="catalytic activity">
    <reaction evidence="1">
        <text>dCTP + H2O + H(+) = dUTP + NH4(+)</text>
        <dbReference type="Rhea" id="RHEA:22680"/>
        <dbReference type="ChEBI" id="CHEBI:15377"/>
        <dbReference type="ChEBI" id="CHEBI:15378"/>
        <dbReference type="ChEBI" id="CHEBI:28938"/>
        <dbReference type="ChEBI" id="CHEBI:61481"/>
        <dbReference type="ChEBI" id="CHEBI:61555"/>
        <dbReference type="EC" id="3.5.4.13"/>
    </reaction>
</comment>
<comment type="pathway">
    <text evidence="1">Pyrimidine metabolism; dUMP biosynthesis; dUMP from dCTP (dUTP route): step 1/2.</text>
</comment>
<comment type="subunit">
    <text evidence="1">Homotrimer.</text>
</comment>
<comment type="similarity">
    <text evidence="1">Belongs to the dCTP deaminase family.</text>
</comment>
<comment type="sequence caution" evidence="3">
    <conflict type="erroneous initiation">
        <sequence resource="EMBL-CDS" id="AAM86198"/>
    </conflict>
</comment>
<comment type="sequence caution" evidence="3">
    <conflict type="erroneous initiation">
        <sequence resource="EMBL-CDS" id="AAS61655"/>
    </conflict>
</comment>
<sequence>MRLCDRDIEAWLDSGKLGIEPRPPVERINGATVDVRLGNQFRVFRGHTAAFIDLSGPKDEVSAALERVMSDEINLPEGEAFFLHPGELALAVTLESVTIPDDLVGWLDGRSSLARLGLMVHVTAHRIDPGWQGRIVLEFYNSGKLPLALRPGMLIGALSFEPLSGPAARPYNSRQDAKYRGQQGAVASRIDKD</sequence>
<gene>
    <name evidence="1" type="primary">dcd</name>
    <name type="ordered locus">YPO1525</name>
    <name type="ordered locus">y2645</name>
    <name type="ordered locus">YP_1414</name>
</gene>
<dbReference type="EC" id="3.5.4.13" evidence="1"/>
<dbReference type="EMBL" id="AL590842">
    <property type="protein sequence ID" value="CAL20171.1"/>
    <property type="molecule type" value="Genomic_DNA"/>
</dbReference>
<dbReference type="EMBL" id="AE009952">
    <property type="protein sequence ID" value="AAM86198.1"/>
    <property type="status" value="ALT_INIT"/>
    <property type="molecule type" value="Genomic_DNA"/>
</dbReference>
<dbReference type="EMBL" id="AE017042">
    <property type="protein sequence ID" value="AAS61655.1"/>
    <property type="status" value="ALT_INIT"/>
    <property type="molecule type" value="Genomic_DNA"/>
</dbReference>
<dbReference type="PIR" id="AI0185">
    <property type="entry name" value="AI0185"/>
</dbReference>
<dbReference type="RefSeq" id="WP_002211873.1">
    <property type="nucleotide sequence ID" value="NZ_WUCM01000031.1"/>
</dbReference>
<dbReference type="RefSeq" id="YP_002346541.1">
    <property type="nucleotide sequence ID" value="NC_003143.1"/>
</dbReference>
<dbReference type="SMR" id="Q8ZFZ8"/>
<dbReference type="STRING" id="214092.YPO1525"/>
<dbReference type="PaxDb" id="214092-YPO1525"/>
<dbReference type="EnsemblBacteria" id="AAS61655">
    <property type="protein sequence ID" value="AAS61655"/>
    <property type="gene ID" value="YP_1414"/>
</dbReference>
<dbReference type="GeneID" id="96665144"/>
<dbReference type="KEGG" id="ype:YPO1525"/>
<dbReference type="KEGG" id="ypk:y2645"/>
<dbReference type="KEGG" id="ypm:YP_1414"/>
<dbReference type="PATRIC" id="fig|214092.21.peg.1861"/>
<dbReference type="eggNOG" id="COG0717">
    <property type="taxonomic scope" value="Bacteria"/>
</dbReference>
<dbReference type="HOGENOM" id="CLU_087476_2_0_6"/>
<dbReference type="OMA" id="PVESMMW"/>
<dbReference type="OrthoDB" id="9780956at2"/>
<dbReference type="UniPathway" id="UPA00610">
    <property type="reaction ID" value="UER00665"/>
</dbReference>
<dbReference type="Proteomes" id="UP000000815">
    <property type="component" value="Chromosome"/>
</dbReference>
<dbReference type="Proteomes" id="UP000001019">
    <property type="component" value="Chromosome"/>
</dbReference>
<dbReference type="Proteomes" id="UP000002490">
    <property type="component" value="Chromosome"/>
</dbReference>
<dbReference type="GO" id="GO:0008829">
    <property type="term" value="F:dCTP deaminase activity"/>
    <property type="evidence" value="ECO:0000318"/>
    <property type="project" value="GO_Central"/>
</dbReference>
<dbReference type="GO" id="GO:0000166">
    <property type="term" value="F:nucleotide binding"/>
    <property type="evidence" value="ECO:0007669"/>
    <property type="project" value="UniProtKB-KW"/>
</dbReference>
<dbReference type="GO" id="GO:0006226">
    <property type="term" value="P:dUMP biosynthetic process"/>
    <property type="evidence" value="ECO:0007669"/>
    <property type="project" value="UniProtKB-UniPathway"/>
</dbReference>
<dbReference type="GO" id="GO:0006229">
    <property type="term" value="P:dUTP biosynthetic process"/>
    <property type="evidence" value="ECO:0007669"/>
    <property type="project" value="UniProtKB-UniRule"/>
</dbReference>
<dbReference type="GO" id="GO:0015949">
    <property type="term" value="P:nucleobase-containing small molecule interconversion"/>
    <property type="evidence" value="ECO:0000318"/>
    <property type="project" value="GO_Central"/>
</dbReference>
<dbReference type="CDD" id="cd07557">
    <property type="entry name" value="trimeric_dUTPase"/>
    <property type="match status" value="1"/>
</dbReference>
<dbReference type="FunFam" id="2.70.40.10:FF:000003">
    <property type="entry name" value="dCTP deaminase"/>
    <property type="match status" value="1"/>
</dbReference>
<dbReference type="Gene3D" id="2.70.40.10">
    <property type="match status" value="1"/>
</dbReference>
<dbReference type="HAMAP" id="MF_00146">
    <property type="entry name" value="dCTP_deaminase"/>
    <property type="match status" value="1"/>
</dbReference>
<dbReference type="InterPro" id="IPR011962">
    <property type="entry name" value="dCTP_deaminase"/>
</dbReference>
<dbReference type="InterPro" id="IPR036157">
    <property type="entry name" value="dUTPase-like_sf"/>
</dbReference>
<dbReference type="InterPro" id="IPR033704">
    <property type="entry name" value="dUTPase_trimeric"/>
</dbReference>
<dbReference type="NCBIfam" id="TIGR02274">
    <property type="entry name" value="dCTP_deam"/>
    <property type="match status" value="1"/>
</dbReference>
<dbReference type="PANTHER" id="PTHR42680">
    <property type="entry name" value="DCTP DEAMINASE"/>
    <property type="match status" value="1"/>
</dbReference>
<dbReference type="PANTHER" id="PTHR42680:SF3">
    <property type="entry name" value="DCTP DEAMINASE"/>
    <property type="match status" value="1"/>
</dbReference>
<dbReference type="Pfam" id="PF22769">
    <property type="entry name" value="DCD"/>
    <property type="match status" value="1"/>
</dbReference>
<dbReference type="SUPFAM" id="SSF51283">
    <property type="entry name" value="dUTPase-like"/>
    <property type="match status" value="1"/>
</dbReference>
<reference key="1">
    <citation type="journal article" date="2001" name="Nature">
        <title>Genome sequence of Yersinia pestis, the causative agent of plague.</title>
        <authorList>
            <person name="Parkhill J."/>
            <person name="Wren B.W."/>
            <person name="Thomson N.R."/>
            <person name="Titball R.W."/>
            <person name="Holden M.T.G."/>
            <person name="Prentice M.B."/>
            <person name="Sebaihia M."/>
            <person name="James K.D."/>
            <person name="Churcher C.M."/>
            <person name="Mungall K.L."/>
            <person name="Baker S."/>
            <person name="Basham D."/>
            <person name="Bentley S.D."/>
            <person name="Brooks K."/>
            <person name="Cerdeno-Tarraga A.-M."/>
            <person name="Chillingworth T."/>
            <person name="Cronin A."/>
            <person name="Davies R.M."/>
            <person name="Davis P."/>
            <person name="Dougan G."/>
            <person name="Feltwell T."/>
            <person name="Hamlin N."/>
            <person name="Holroyd S."/>
            <person name="Jagels K."/>
            <person name="Karlyshev A.V."/>
            <person name="Leather S."/>
            <person name="Moule S."/>
            <person name="Oyston P.C.F."/>
            <person name="Quail M.A."/>
            <person name="Rutherford K.M."/>
            <person name="Simmonds M."/>
            <person name="Skelton J."/>
            <person name="Stevens K."/>
            <person name="Whitehead S."/>
            <person name="Barrell B.G."/>
        </authorList>
    </citation>
    <scope>NUCLEOTIDE SEQUENCE [LARGE SCALE GENOMIC DNA]</scope>
    <source>
        <strain>CO-92 / Biovar Orientalis</strain>
    </source>
</reference>
<reference key="2">
    <citation type="journal article" date="2002" name="J. Bacteriol.">
        <title>Genome sequence of Yersinia pestis KIM.</title>
        <authorList>
            <person name="Deng W."/>
            <person name="Burland V."/>
            <person name="Plunkett G. III"/>
            <person name="Boutin A."/>
            <person name="Mayhew G.F."/>
            <person name="Liss P."/>
            <person name="Perna N.T."/>
            <person name="Rose D.J."/>
            <person name="Mau B."/>
            <person name="Zhou S."/>
            <person name="Schwartz D.C."/>
            <person name="Fetherston J.D."/>
            <person name="Lindler L.E."/>
            <person name="Brubaker R.R."/>
            <person name="Plano G.V."/>
            <person name="Straley S.C."/>
            <person name="McDonough K.A."/>
            <person name="Nilles M.L."/>
            <person name="Matson J.S."/>
            <person name="Blattner F.R."/>
            <person name="Perry R.D."/>
        </authorList>
    </citation>
    <scope>NUCLEOTIDE SEQUENCE [LARGE SCALE GENOMIC DNA]</scope>
    <source>
        <strain>KIM10+ / Biovar Mediaevalis</strain>
    </source>
</reference>
<reference key="3">
    <citation type="journal article" date="2004" name="DNA Res.">
        <title>Complete genome sequence of Yersinia pestis strain 91001, an isolate avirulent to humans.</title>
        <authorList>
            <person name="Song Y."/>
            <person name="Tong Z."/>
            <person name="Wang J."/>
            <person name="Wang L."/>
            <person name="Guo Z."/>
            <person name="Han Y."/>
            <person name="Zhang J."/>
            <person name="Pei D."/>
            <person name="Zhou D."/>
            <person name="Qin H."/>
            <person name="Pang X."/>
            <person name="Han Y."/>
            <person name="Zhai J."/>
            <person name="Li M."/>
            <person name="Cui B."/>
            <person name="Qi Z."/>
            <person name="Jin L."/>
            <person name="Dai R."/>
            <person name="Chen F."/>
            <person name="Li S."/>
            <person name="Ye C."/>
            <person name="Du Z."/>
            <person name="Lin W."/>
            <person name="Wang J."/>
            <person name="Yu J."/>
            <person name="Yang H."/>
            <person name="Wang J."/>
            <person name="Huang P."/>
            <person name="Yang R."/>
        </authorList>
    </citation>
    <scope>NUCLEOTIDE SEQUENCE [LARGE SCALE GENOMIC DNA]</scope>
    <source>
        <strain>91001 / Biovar Mediaevalis</strain>
    </source>
</reference>
<evidence type="ECO:0000255" key="1">
    <source>
        <dbReference type="HAMAP-Rule" id="MF_00146"/>
    </source>
</evidence>
<evidence type="ECO:0000256" key="2">
    <source>
        <dbReference type="SAM" id="MobiDB-lite"/>
    </source>
</evidence>
<evidence type="ECO:0000305" key="3"/>
<proteinExistence type="inferred from homology"/>
<keyword id="KW-0378">Hydrolase</keyword>
<keyword id="KW-0546">Nucleotide metabolism</keyword>
<keyword id="KW-0547">Nucleotide-binding</keyword>
<keyword id="KW-1185">Reference proteome</keyword>
<feature type="chain" id="PRO_0000156024" description="dCTP deaminase">
    <location>
        <begin position="1"/>
        <end position="193"/>
    </location>
</feature>
<feature type="region of interest" description="Disordered" evidence="2">
    <location>
        <begin position="169"/>
        <end position="193"/>
    </location>
</feature>
<feature type="active site" description="Proton donor/acceptor" evidence="1">
    <location>
        <position position="138"/>
    </location>
</feature>
<feature type="binding site" evidence="1">
    <location>
        <begin position="110"/>
        <end position="115"/>
    </location>
    <ligand>
        <name>dCTP</name>
        <dbReference type="ChEBI" id="CHEBI:61481"/>
    </ligand>
</feature>
<feature type="binding site" evidence="1">
    <location>
        <position position="128"/>
    </location>
    <ligand>
        <name>dCTP</name>
        <dbReference type="ChEBI" id="CHEBI:61481"/>
    </ligand>
</feature>
<feature type="binding site" evidence="1">
    <location>
        <begin position="136"/>
        <end position="138"/>
    </location>
    <ligand>
        <name>dCTP</name>
        <dbReference type="ChEBI" id="CHEBI:61481"/>
    </ligand>
</feature>
<feature type="binding site" evidence="1">
    <location>
        <position position="171"/>
    </location>
    <ligand>
        <name>dCTP</name>
        <dbReference type="ChEBI" id="CHEBI:61481"/>
    </ligand>
</feature>
<feature type="binding site" evidence="1">
    <location>
        <position position="178"/>
    </location>
    <ligand>
        <name>dCTP</name>
        <dbReference type="ChEBI" id="CHEBI:61481"/>
    </ligand>
</feature>
<feature type="binding site" evidence="1">
    <location>
        <position position="182"/>
    </location>
    <ligand>
        <name>dCTP</name>
        <dbReference type="ChEBI" id="CHEBI:61481"/>
    </ligand>
</feature>
<protein>
    <recommendedName>
        <fullName evidence="1">dCTP deaminase</fullName>
        <ecNumber evidence="1">3.5.4.13</ecNumber>
    </recommendedName>
    <alternativeName>
        <fullName evidence="1">Deoxycytidine triphosphate deaminase</fullName>
    </alternativeName>
</protein>
<organism>
    <name type="scientific">Yersinia pestis</name>
    <dbReference type="NCBI Taxonomy" id="632"/>
    <lineage>
        <taxon>Bacteria</taxon>
        <taxon>Pseudomonadati</taxon>
        <taxon>Pseudomonadota</taxon>
        <taxon>Gammaproteobacteria</taxon>
        <taxon>Enterobacterales</taxon>
        <taxon>Yersiniaceae</taxon>
        <taxon>Yersinia</taxon>
    </lineage>
</organism>
<name>DCD_YERPE</name>
<accession>Q8ZFZ8</accession>
<accession>Q0WGP7</accession>